<name>Y1543_MYCTU</name>
<evidence type="ECO:0000250" key="1"/>
<evidence type="ECO:0000256" key="2">
    <source>
        <dbReference type="SAM" id="MobiDB-lite"/>
    </source>
</evidence>
<evidence type="ECO:0000305" key="3"/>
<comment type="similarity">
    <text evidence="3">Belongs to the short-chain dehydrogenases/reductases (SDR) family.</text>
</comment>
<proteinExistence type="evidence at protein level"/>
<gene>
    <name type="ordered locus">Rv1543</name>
    <name type="ORF">MTCY48.22c</name>
</gene>
<dbReference type="EC" id="1.-.-.-"/>
<dbReference type="EMBL" id="AL123456">
    <property type="protein sequence ID" value="CCP44307.1"/>
    <property type="molecule type" value="Genomic_DNA"/>
</dbReference>
<dbReference type="PIR" id="D70761">
    <property type="entry name" value="D70761"/>
</dbReference>
<dbReference type="RefSeq" id="NP_216059.1">
    <property type="nucleotide sequence ID" value="NC_000962.3"/>
</dbReference>
<dbReference type="RefSeq" id="WP_003407734.1">
    <property type="nucleotide sequence ID" value="NZ_NVQJ01000004.1"/>
</dbReference>
<dbReference type="SMR" id="P9WGS1"/>
<dbReference type="FunCoup" id="P9WGS1">
    <property type="interactions" value="2"/>
</dbReference>
<dbReference type="STRING" id="83332.Rv1543"/>
<dbReference type="PaxDb" id="83332-Rv1543"/>
<dbReference type="DNASU" id="886400"/>
<dbReference type="GeneID" id="886400"/>
<dbReference type="KEGG" id="mtu:Rv1543"/>
<dbReference type="KEGG" id="mtv:RVBD_1543"/>
<dbReference type="TubercuList" id="Rv1543"/>
<dbReference type="eggNOG" id="COG1028">
    <property type="taxonomic scope" value="Bacteria"/>
</dbReference>
<dbReference type="InParanoid" id="P9WGS1"/>
<dbReference type="OrthoDB" id="9810734at2"/>
<dbReference type="PhylomeDB" id="P9WGS1"/>
<dbReference type="Proteomes" id="UP000001584">
    <property type="component" value="Chromosome"/>
</dbReference>
<dbReference type="GO" id="GO:0016020">
    <property type="term" value="C:membrane"/>
    <property type="evidence" value="ECO:0000318"/>
    <property type="project" value="GO_Central"/>
</dbReference>
<dbReference type="GO" id="GO:0009274">
    <property type="term" value="C:peptidoglycan-based cell wall"/>
    <property type="evidence" value="ECO:0007005"/>
    <property type="project" value="MTBBASE"/>
</dbReference>
<dbReference type="GO" id="GO:0005886">
    <property type="term" value="C:plasma membrane"/>
    <property type="evidence" value="ECO:0007005"/>
    <property type="project" value="MTBBASE"/>
</dbReference>
<dbReference type="GO" id="GO:0016491">
    <property type="term" value="F:oxidoreductase activity"/>
    <property type="evidence" value="ECO:0007669"/>
    <property type="project" value="UniProtKB-KW"/>
</dbReference>
<dbReference type="CDD" id="cd05233">
    <property type="entry name" value="SDR_c"/>
    <property type="match status" value="1"/>
</dbReference>
<dbReference type="FunFam" id="3.40.50.720:FF:000601">
    <property type="entry name" value="Fatty acyl-CoA reductase"/>
    <property type="match status" value="1"/>
</dbReference>
<dbReference type="Gene3D" id="3.40.50.720">
    <property type="entry name" value="NAD(P)-binding Rossmann-like Domain"/>
    <property type="match status" value="1"/>
</dbReference>
<dbReference type="InterPro" id="IPR036291">
    <property type="entry name" value="NAD(P)-bd_dom_sf"/>
</dbReference>
<dbReference type="InterPro" id="IPR002347">
    <property type="entry name" value="SDR_fam"/>
</dbReference>
<dbReference type="PANTHER" id="PTHR44196">
    <property type="entry name" value="DEHYDROGENASE/REDUCTASE SDR FAMILY MEMBER 7B"/>
    <property type="match status" value="1"/>
</dbReference>
<dbReference type="PANTHER" id="PTHR44196:SF1">
    <property type="entry name" value="DEHYDROGENASE_REDUCTASE SDR FAMILY MEMBER 7B"/>
    <property type="match status" value="1"/>
</dbReference>
<dbReference type="Pfam" id="PF00106">
    <property type="entry name" value="adh_short"/>
    <property type="match status" value="1"/>
</dbReference>
<dbReference type="PRINTS" id="PR00081">
    <property type="entry name" value="GDHRDH"/>
</dbReference>
<dbReference type="PRINTS" id="PR00080">
    <property type="entry name" value="SDRFAMILY"/>
</dbReference>
<dbReference type="SMART" id="SM00822">
    <property type="entry name" value="PKS_KR"/>
    <property type="match status" value="1"/>
</dbReference>
<dbReference type="SUPFAM" id="SSF51735">
    <property type="entry name" value="NAD(P)-binding Rossmann-fold domains"/>
    <property type="match status" value="1"/>
</dbReference>
<sequence>MNLGDLTNFVEKPLAAVSNIVNTPNSAGRYRPFYLRNLLDAVQGRNLNDAVKGKVVLITGGSSGIGAAAAKKIAEAGGTVVLVARTLENLENVANDIRAIRGNGGTAHVYPCDLSDMDAIAVMADQVLGDLGGVDILINNAGRSIRRSLELSYDRIHDYQRTMQLNYLGAVQLILKFIPGMRERHFGHIVNVSSVGVQTRAPRFGAYIASKAALDSLCDALQAETVHDNVRFTTVHMALVRTPMISPTTIYDKFPTLTPDQAAGVITDAIVHRPRRASSPFGQFAAVADAVNPAVMDRVRNRAFNMFGDSSAAKGSESQTDTSELDKRSETFVRATRGIHW</sequence>
<keyword id="KW-0560">Oxidoreductase</keyword>
<keyword id="KW-1185">Reference proteome</keyword>
<feature type="chain" id="PRO_0000054856" description="Uncharacterized oxidoreductase Rv1543">
    <location>
        <begin position="1"/>
        <end position="341"/>
    </location>
</feature>
<feature type="region of interest" description="Disordered" evidence="2">
    <location>
        <begin position="309"/>
        <end position="329"/>
    </location>
</feature>
<feature type="active site" description="Proton acceptor" evidence="1">
    <location>
        <position position="207"/>
    </location>
</feature>
<feature type="binding site" evidence="1">
    <location>
        <begin position="58"/>
        <end position="82"/>
    </location>
    <ligand>
        <name>NADP(+)</name>
        <dbReference type="ChEBI" id="CHEBI:58349"/>
    </ligand>
</feature>
<feature type="binding site" evidence="1">
    <location>
        <position position="194"/>
    </location>
    <ligand>
        <name>substrate</name>
    </ligand>
</feature>
<protein>
    <recommendedName>
        <fullName>Uncharacterized oxidoreductase Rv1543</fullName>
        <ecNumber>1.-.-.-</ecNumber>
    </recommendedName>
</protein>
<organism>
    <name type="scientific">Mycobacterium tuberculosis (strain ATCC 25618 / H37Rv)</name>
    <dbReference type="NCBI Taxonomy" id="83332"/>
    <lineage>
        <taxon>Bacteria</taxon>
        <taxon>Bacillati</taxon>
        <taxon>Actinomycetota</taxon>
        <taxon>Actinomycetes</taxon>
        <taxon>Mycobacteriales</taxon>
        <taxon>Mycobacteriaceae</taxon>
        <taxon>Mycobacterium</taxon>
        <taxon>Mycobacterium tuberculosis complex</taxon>
    </lineage>
</organism>
<reference key="1">
    <citation type="journal article" date="1998" name="Nature">
        <title>Deciphering the biology of Mycobacterium tuberculosis from the complete genome sequence.</title>
        <authorList>
            <person name="Cole S.T."/>
            <person name="Brosch R."/>
            <person name="Parkhill J."/>
            <person name="Garnier T."/>
            <person name="Churcher C.M."/>
            <person name="Harris D.E."/>
            <person name="Gordon S.V."/>
            <person name="Eiglmeier K."/>
            <person name="Gas S."/>
            <person name="Barry C.E. III"/>
            <person name="Tekaia F."/>
            <person name="Badcock K."/>
            <person name="Basham D."/>
            <person name="Brown D."/>
            <person name="Chillingworth T."/>
            <person name="Connor R."/>
            <person name="Davies R.M."/>
            <person name="Devlin K."/>
            <person name="Feltwell T."/>
            <person name="Gentles S."/>
            <person name="Hamlin N."/>
            <person name="Holroyd S."/>
            <person name="Hornsby T."/>
            <person name="Jagels K."/>
            <person name="Krogh A."/>
            <person name="McLean J."/>
            <person name="Moule S."/>
            <person name="Murphy L.D."/>
            <person name="Oliver S."/>
            <person name="Osborne J."/>
            <person name="Quail M.A."/>
            <person name="Rajandream M.A."/>
            <person name="Rogers J."/>
            <person name="Rutter S."/>
            <person name="Seeger K."/>
            <person name="Skelton S."/>
            <person name="Squares S."/>
            <person name="Squares R."/>
            <person name="Sulston J.E."/>
            <person name="Taylor K."/>
            <person name="Whitehead S."/>
            <person name="Barrell B.G."/>
        </authorList>
    </citation>
    <scope>NUCLEOTIDE SEQUENCE [LARGE SCALE GENOMIC DNA]</scope>
    <source>
        <strain>ATCC 25618 / H37Rv</strain>
    </source>
</reference>
<reference key="2">
    <citation type="journal article" date="2011" name="Mol. Cell. Proteomics">
        <title>Proteogenomic analysis of Mycobacterium tuberculosis by high resolution mass spectrometry.</title>
        <authorList>
            <person name="Kelkar D.S."/>
            <person name="Kumar D."/>
            <person name="Kumar P."/>
            <person name="Balakrishnan L."/>
            <person name="Muthusamy B."/>
            <person name="Yadav A.K."/>
            <person name="Shrivastava P."/>
            <person name="Marimuthu A."/>
            <person name="Anand S."/>
            <person name="Sundaram H."/>
            <person name="Kingsbury R."/>
            <person name="Harsha H.C."/>
            <person name="Nair B."/>
            <person name="Prasad T.S."/>
            <person name="Chauhan D.S."/>
            <person name="Katoch K."/>
            <person name="Katoch V.M."/>
            <person name="Kumar P."/>
            <person name="Chaerkady R."/>
            <person name="Ramachandran S."/>
            <person name="Dash D."/>
            <person name="Pandey A."/>
        </authorList>
    </citation>
    <scope>IDENTIFICATION BY MASS SPECTROMETRY [LARGE SCALE ANALYSIS]</scope>
    <source>
        <strain>ATCC 25618 / H37Rv</strain>
    </source>
</reference>
<accession>P9WGS1</accession>
<accession>L0T756</accession>
<accession>P66779</accession>
<accession>Q10783</accession>